<gene>
    <name type="primary">ceh-33</name>
    <name type="ORF">C10G8.7</name>
</gene>
<organism>
    <name type="scientific">Caenorhabditis elegans</name>
    <dbReference type="NCBI Taxonomy" id="6239"/>
    <lineage>
        <taxon>Eukaryota</taxon>
        <taxon>Metazoa</taxon>
        <taxon>Ecdysozoa</taxon>
        <taxon>Nematoda</taxon>
        <taxon>Chromadorea</taxon>
        <taxon>Rhabditida</taxon>
        <taxon>Rhabditina</taxon>
        <taxon>Rhabditomorpha</taxon>
        <taxon>Rhabditoidea</taxon>
        <taxon>Rhabditidae</taxon>
        <taxon>Peloderinae</taxon>
        <taxon>Caenorhabditis</taxon>
    </lineage>
</organism>
<feature type="chain" id="PRO_0000048999" description="Homeobox protein ceh-33">
    <location>
        <begin position="1"/>
        <end position="261"/>
    </location>
</feature>
<feature type="DNA-binding region" description="Homeobox" evidence="1">
    <location>
        <begin position="133"/>
        <end position="192"/>
    </location>
</feature>
<accession>Q94166</accession>
<sequence length="261" mass="30711">MQLNSSSFHPHHFTCDTTRYSEEQVACICEALSNDARKLSQFVWTVLERDEMRNNQYILKAQAFLAFHSNNFKELYRIIESHHFASEHHLPLQEWWLNAHYHEAEKIRGRQLGAVGKYRIRRKYPLPRTIWDGEETSYCFRDKSRVLLRDWYCRNSYPSPREKRELAEKTHLTVTQVSNWFKNRRQRDRAGVPEPKDCLKDISEEEDLKLIRKTASKLSNSFHNPSDLSSYSAAAAAATFPGFYMNYNDMMIGAGTSYQSL</sequence>
<evidence type="ECO:0000255" key="1">
    <source>
        <dbReference type="PROSITE-ProRule" id="PRU00108"/>
    </source>
</evidence>
<evidence type="ECO:0000305" key="2"/>
<protein>
    <recommendedName>
        <fullName>Homeobox protein ceh-33</fullName>
    </recommendedName>
</protein>
<keyword id="KW-0217">Developmental protein</keyword>
<keyword id="KW-0238">DNA-binding</keyword>
<keyword id="KW-0371">Homeobox</keyword>
<keyword id="KW-0539">Nucleus</keyword>
<keyword id="KW-1185">Reference proteome</keyword>
<name>HM33_CAEEL</name>
<dbReference type="EMBL" id="FO080497">
    <property type="protein sequence ID" value="CCD64165.1"/>
    <property type="molecule type" value="Genomic_DNA"/>
</dbReference>
<dbReference type="PIR" id="G89046">
    <property type="entry name" value="G89046"/>
</dbReference>
<dbReference type="RefSeq" id="NP_504420.1">
    <property type="nucleotide sequence ID" value="NM_072019.4"/>
</dbReference>
<dbReference type="SMR" id="Q94166"/>
<dbReference type="BioGRID" id="56124">
    <property type="interactions" value="1"/>
</dbReference>
<dbReference type="DIP" id="DIP-25570N"/>
<dbReference type="FunCoup" id="Q94166">
    <property type="interactions" value="105"/>
</dbReference>
<dbReference type="IntAct" id="Q94166">
    <property type="interactions" value="1"/>
</dbReference>
<dbReference type="STRING" id="6239.C10G8.7.1"/>
<dbReference type="PaxDb" id="6239-C10G8.7"/>
<dbReference type="EnsemblMetazoa" id="C10G8.7.1">
    <property type="protein sequence ID" value="C10G8.7.1"/>
    <property type="gene ID" value="WBGene00000454"/>
</dbReference>
<dbReference type="GeneID" id="191622"/>
<dbReference type="KEGG" id="cel:CELE_C10G8.7"/>
<dbReference type="UCSC" id="C10G8.7">
    <property type="organism name" value="c. elegans"/>
</dbReference>
<dbReference type="AGR" id="WB:WBGene00000454"/>
<dbReference type="CTD" id="191622"/>
<dbReference type="WormBase" id="C10G8.7">
    <property type="protein sequence ID" value="CE08078"/>
    <property type="gene ID" value="WBGene00000454"/>
    <property type="gene designation" value="ceh-33"/>
</dbReference>
<dbReference type="eggNOG" id="KOG0775">
    <property type="taxonomic scope" value="Eukaryota"/>
</dbReference>
<dbReference type="HOGENOM" id="CLU_046914_0_1_1"/>
<dbReference type="InParanoid" id="Q94166"/>
<dbReference type="OMA" id="PPLHHTC"/>
<dbReference type="OrthoDB" id="3501850at2759"/>
<dbReference type="PhylomeDB" id="Q94166"/>
<dbReference type="PRO" id="PR:Q94166"/>
<dbReference type="Proteomes" id="UP000001940">
    <property type="component" value="Chromosome V"/>
</dbReference>
<dbReference type="Bgee" id="WBGene00000454">
    <property type="expression patterns" value="Expressed in larva and 3 other cell types or tissues"/>
</dbReference>
<dbReference type="GO" id="GO:0005634">
    <property type="term" value="C:nucleus"/>
    <property type="evidence" value="ECO:0000318"/>
    <property type="project" value="GO_Central"/>
</dbReference>
<dbReference type="GO" id="GO:0005667">
    <property type="term" value="C:transcription regulator complex"/>
    <property type="evidence" value="ECO:0000318"/>
    <property type="project" value="GO_Central"/>
</dbReference>
<dbReference type="GO" id="GO:0003700">
    <property type="term" value="F:DNA-binding transcription factor activity"/>
    <property type="evidence" value="ECO:0000250"/>
    <property type="project" value="WormBase"/>
</dbReference>
<dbReference type="GO" id="GO:0000981">
    <property type="term" value="F:DNA-binding transcription factor activity, RNA polymerase II-specific"/>
    <property type="evidence" value="ECO:0000318"/>
    <property type="project" value="GO_Central"/>
</dbReference>
<dbReference type="GO" id="GO:0000978">
    <property type="term" value="F:RNA polymerase II cis-regulatory region sequence-specific DNA binding"/>
    <property type="evidence" value="ECO:0000318"/>
    <property type="project" value="GO_Central"/>
</dbReference>
<dbReference type="GO" id="GO:0006355">
    <property type="term" value="P:regulation of DNA-templated transcription"/>
    <property type="evidence" value="ECO:0000304"/>
    <property type="project" value="WormBase"/>
</dbReference>
<dbReference type="GO" id="GO:0006357">
    <property type="term" value="P:regulation of transcription by RNA polymerase II"/>
    <property type="evidence" value="ECO:0000318"/>
    <property type="project" value="GO_Central"/>
</dbReference>
<dbReference type="CDD" id="cd00086">
    <property type="entry name" value="homeodomain"/>
    <property type="match status" value="1"/>
</dbReference>
<dbReference type="FunFam" id="1.10.10.60:FF:000556">
    <property type="entry name" value="SIX homeobox 9"/>
    <property type="match status" value="1"/>
</dbReference>
<dbReference type="Gene3D" id="1.10.10.60">
    <property type="entry name" value="Homeodomain-like"/>
    <property type="match status" value="1"/>
</dbReference>
<dbReference type="InterPro" id="IPR001356">
    <property type="entry name" value="HD"/>
</dbReference>
<dbReference type="InterPro" id="IPR017970">
    <property type="entry name" value="Homeobox_CS"/>
</dbReference>
<dbReference type="InterPro" id="IPR009057">
    <property type="entry name" value="Homeodomain-like_sf"/>
</dbReference>
<dbReference type="InterPro" id="IPR031701">
    <property type="entry name" value="SIX1_SD"/>
</dbReference>
<dbReference type="PANTHER" id="PTHR10390:SF68">
    <property type="entry name" value="HOMEOBOX PROTEIN CEH-33"/>
    <property type="match status" value="1"/>
</dbReference>
<dbReference type="PANTHER" id="PTHR10390">
    <property type="entry name" value="HOMEOBOX PROTEIN SIX"/>
    <property type="match status" value="1"/>
</dbReference>
<dbReference type="Pfam" id="PF00046">
    <property type="entry name" value="Homeodomain"/>
    <property type="match status" value="1"/>
</dbReference>
<dbReference type="Pfam" id="PF16878">
    <property type="entry name" value="SIX1_SD"/>
    <property type="match status" value="1"/>
</dbReference>
<dbReference type="SMART" id="SM00389">
    <property type="entry name" value="HOX"/>
    <property type="match status" value="1"/>
</dbReference>
<dbReference type="SUPFAM" id="SSF46689">
    <property type="entry name" value="Homeodomain-like"/>
    <property type="match status" value="1"/>
</dbReference>
<dbReference type="PROSITE" id="PS00027">
    <property type="entry name" value="HOMEOBOX_1"/>
    <property type="match status" value="1"/>
</dbReference>
<dbReference type="PROSITE" id="PS50071">
    <property type="entry name" value="HOMEOBOX_2"/>
    <property type="match status" value="1"/>
</dbReference>
<comment type="subcellular location">
    <subcellularLocation>
        <location evidence="2">Nucleus</location>
    </subcellularLocation>
</comment>
<comment type="similarity">
    <text evidence="2">Belongs to the SIX/Sine oculis homeobox family.</text>
</comment>
<reference key="1">
    <citation type="journal article" date="1998" name="Science">
        <title>Genome sequence of the nematode C. elegans: a platform for investigating biology.</title>
        <authorList>
            <consortium name="The C. elegans sequencing consortium"/>
        </authorList>
    </citation>
    <scope>NUCLEOTIDE SEQUENCE [LARGE SCALE GENOMIC DNA]</scope>
    <source>
        <strain>Bristol N2</strain>
    </source>
</reference>
<proteinExistence type="inferred from homology"/>